<accession>P23718</accession>
<feature type="chain" id="PRO_0000105712" description="Nodulation protein D 1">
    <location>
        <begin position="1"/>
        <end position="314"/>
    </location>
</feature>
<feature type="domain" description="HTH lysR-type" evidence="1">
    <location>
        <begin position="6"/>
        <end position="63"/>
    </location>
</feature>
<feature type="DNA-binding region" description="H-T-H motif" evidence="1">
    <location>
        <begin position="23"/>
        <end position="42"/>
    </location>
</feature>
<evidence type="ECO:0000255" key="1">
    <source>
        <dbReference type="PROSITE-ProRule" id="PRU00253"/>
    </source>
</evidence>
<evidence type="ECO:0000305" key="2"/>
<sequence>MRFKGLDLNLLVALDALMTERNLTAAARSINLSQPAMSAAVGRLRTYFNDDLFTMVGRELVPTPRAERLAPSVREALLHIQVSIISWDPFCPAQSDRCFRVILSDYAALVFFEKVVTRVAREAPAVSFELLPIADNYDEYLRRGDADFLIFPELLMSRAHPKVALFEETLVCVGCHSNKLLSEQLTLERYMSMGHVVVKFGNARTASFEEWCLLGHGLKRHVEVVVQGFSMVPFMLSGTERIATMPLRLVKQLEKTIPLRIADLPLPLPAFTQALQWPALHNSGQASLWMRDVLCQEASRMPSPHEVMRRLRIS</sequence>
<dbReference type="EMBL" id="X54214">
    <property type="protein sequence ID" value="CAA38126.1"/>
    <property type="molecule type" value="Genomic_DNA"/>
</dbReference>
<dbReference type="PIR" id="S11787">
    <property type="entry name" value="S11787"/>
</dbReference>
<dbReference type="RefSeq" id="WP_018247214.1">
    <property type="nucleotide sequence ID" value="NZ_WNKD01000037.1"/>
</dbReference>
<dbReference type="SMR" id="P23718"/>
<dbReference type="GO" id="GO:0003677">
    <property type="term" value="F:DNA binding"/>
    <property type="evidence" value="ECO:0007669"/>
    <property type="project" value="UniProtKB-KW"/>
</dbReference>
<dbReference type="GO" id="GO:0003700">
    <property type="term" value="F:DNA-binding transcription factor activity"/>
    <property type="evidence" value="ECO:0007669"/>
    <property type="project" value="InterPro"/>
</dbReference>
<dbReference type="CDD" id="cd08462">
    <property type="entry name" value="PBP2_NodD"/>
    <property type="match status" value="1"/>
</dbReference>
<dbReference type="Gene3D" id="3.40.190.10">
    <property type="entry name" value="Periplasmic binding protein-like II"/>
    <property type="match status" value="2"/>
</dbReference>
<dbReference type="Gene3D" id="1.10.10.10">
    <property type="entry name" value="Winged helix-like DNA-binding domain superfamily/Winged helix DNA-binding domain"/>
    <property type="match status" value="1"/>
</dbReference>
<dbReference type="InterPro" id="IPR050389">
    <property type="entry name" value="LysR-type_TF"/>
</dbReference>
<dbReference type="InterPro" id="IPR005119">
    <property type="entry name" value="LysR_subst-bd"/>
</dbReference>
<dbReference type="InterPro" id="IPR037416">
    <property type="entry name" value="NodD_PBP2"/>
</dbReference>
<dbReference type="InterPro" id="IPR000847">
    <property type="entry name" value="Tscrpt_reg_HTH_LysR"/>
</dbReference>
<dbReference type="InterPro" id="IPR036388">
    <property type="entry name" value="WH-like_DNA-bd_sf"/>
</dbReference>
<dbReference type="InterPro" id="IPR036390">
    <property type="entry name" value="WH_DNA-bd_sf"/>
</dbReference>
<dbReference type="PANTHER" id="PTHR30118:SF6">
    <property type="entry name" value="HTH-TYPE TRANSCRIPTIONAL REGULATOR LEUO"/>
    <property type="match status" value="1"/>
</dbReference>
<dbReference type="PANTHER" id="PTHR30118">
    <property type="entry name" value="HTH-TYPE TRANSCRIPTIONAL REGULATOR LEUO-RELATED"/>
    <property type="match status" value="1"/>
</dbReference>
<dbReference type="Pfam" id="PF00126">
    <property type="entry name" value="HTH_1"/>
    <property type="match status" value="1"/>
</dbReference>
<dbReference type="Pfam" id="PF03466">
    <property type="entry name" value="LysR_substrate"/>
    <property type="match status" value="1"/>
</dbReference>
<dbReference type="PRINTS" id="PR00039">
    <property type="entry name" value="HTHLYSR"/>
</dbReference>
<dbReference type="SUPFAM" id="SSF53850">
    <property type="entry name" value="Periplasmic binding protein-like II"/>
    <property type="match status" value="1"/>
</dbReference>
<dbReference type="SUPFAM" id="SSF46785">
    <property type="entry name" value="Winged helix' DNA-binding domain"/>
    <property type="match status" value="1"/>
</dbReference>
<dbReference type="PROSITE" id="PS50931">
    <property type="entry name" value="HTH_LYSR"/>
    <property type="match status" value="1"/>
</dbReference>
<organism>
    <name type="scientific">Rhizobium leguminosarum bv. phaseoli</name>
    <dbReference type="NCBI Taxonomy" id="385"/>
    <lineage>
        <taxon>Bacteria</taxon>
        <taxon>Pseudomonadati</taxon>
        <taxon>Pseudomonadota</taxon>
        <taxon>Alphaproteobacteria</taxon>
        <taxon>Hyphomicrobiales</taxon>
        <taxon>Rhizobiaceae</taxon>
        <taxon>Rhizobium/Agrobacterium group</taxon>
        <taxon>Rhizobium</taxon>
    </lineage>
</organism>
<gene>
    <name type="primary">nodD1</name>
</gene>
<proteinExistence type="inferred from homology"/>
<comment type="function">
    <text>NodD regulates the expression of the nodABCFE genes which encode other nodulation proteins. NodD is also a negative regulator of its own expression. Binds flavonoids as inducers.</text>
</comment>
<comment type="similarity">
    <text evidence="2">Belongs to the LysR transcriptional regulatory family.</text>
</comment>
<geneLocation type="plasmid">
    <name>sym</name>
</geneLocation>
<protein>
    <recommendedName>
        <fullName>Nodulation protein D 1</fullName>
    </recommendedName>
</protein>
<keyword id="KW-0010">Activator</keyword>
<keyword id="KW-0238">DNA-binding</keyword>
<keyword id="KW-0536">Nodulation</keyword>
<keyword id="KW-0614">Plasmid</keyword>
<keyword id="KW-0678">Repressor</keyword>
<keyword id="KW-0804">Transcription</keyword>
<keyword id="KW-0805">Transcription regulation</keyword>
<name>NODD1_RHILP</name>
<reference key="1">
    <citation type="journal article" date="1990" name="Mol. Microbiol.">
        <title>Analysis of three nodD genes in Rhizobium leguminosarum biovar phaseoli; nodD1 is preceded by noIE, a gene whose product is secreted from the cytoplasm.</title>
        <authorList>
            <person name="Davis E.O."/>
            <person name="Johnston A.W.B."/>
        </authorList>
    </citation>
    <scope>NUCLEOTIDE SEQUENCE [GENOMIC DNA]</scope>
    <source>
        <strain>8002</strain>
    </source>
</reference>